<gene>
    <name evidence="1" type="primary">nhaA</name>
    <name type="ordered locus">HEAR2033</name>
</gene>
<dbReference type="EMBL" id="CU207211">
    <property type="protein sequence ID" value="CAL62177.1"/>
    <property type="molecule type" value="Genomic_DNA"/>
</dbReference>
<dbReference type="SMR" id="A4G6P0"/>
<dbReference type="STRING" id="204773.HEAR2033"/>
<dbReference type="KEGG" id="har:HEAR2033"/>
<dbReference type="eggNOG" id="COG1651">
    <property type="taxonomic scope" value="Bacteria"/>
</dbReference>
<dbReference type="eggNOG" id="COG3004">
    <property type="taxonomic scope" value="Bacteria"/>
</dbReference>
<dbReference type="HOGENOM" id="CLU_015803_3_0_4"/>
<dbReference type="OrthoDB" id="9808135at2"/>
<dbReference type="Proteomes" id="UP000006697">
    <property type="component" value="Chromosome"/>
</dbReference>
<dbReference type="GO" id="GO:0005886">
    <property type="term" value="C:plasma membrane"/>
    <property type="evidence" value="ECO:0007669"/>
    <property type="project" value="UniProtKB-SubCell"/>
</dbReference>
<dbReference type="GO" id="GO:0015385">
    <property type="term" value="F:sodium:proton antiporter activity"/>
    <property type="evidence" value="ECO:0007669"/>
    <property type="project" value="TreeGrafter"/>
</dbReference>
<dbReference type="GO" id="GO:0006885">
    <property type="term" value="P:regulation of pH"/>
    <property type="evidence" value="ECO:0007669"/>
    <property type="project" value="InterPro"/>
</dbReference>
<dbReference type="Gene3D" id="3.40.30.10">
    <property type="entry name" value="Glutaredoxin"/>
    <property type="match status" value="1"/>
</dbReference>
<dbReference type="Gene3D" id="1.20.1530.10">
    <property type="entry name" value="Na+/H+ antiporter like domain"/>
    <property type="match status" value="1"/>
</dbReference>
<dbReference type="HAMAP" id="MF_01844">
    <property type="entry name" value="NhaA"/>
    <property type="match status" value="1"/>
</dbReference>
<dbReference type="InterPro" id="IPR023171">
    <property type="entry name" value="Na/H_antiporter_dom_sf"/>
</dbReference>
<dbReference type="InterPro" id="IPR004670">
    <property type="entry name" value="NhaA"/>
</dbReference>
<dbReference type="InterPro" id="IPR012336">
    <property type="entry name" value="Thioredoxin-like_fold"/>
</dbReference>
<dbReference type="InterPro" id="IPR036249">
    <property type="entry name" value="Thioredoxin-like_sf"/>
</dbReference>
<dbReference type="InterPro" id="IPR013766">
    <property type="entry name" value="Thioredoxin_domain"/>
</dbReference>
<dbReference type="NCBIfam" id="TIGR00773">
    <property type="entry name" value="NhaA"/>
    <property type="match status" value="1"/>
</dbReference>
<dbReference type="PANTHER" id="PTHR30341:SF0">
    <property type="entry name" value="NA(+)_H(+) ANTIPORTER NHAA"/>
    <property type="match status" value="1"/>
</dbReference>
<dbReference type="PANTHER" id="PTHR30341">
    <property type="entry name" value="SODIUM ION/PROTON ANTIPORTER NHAA-RELATED"/>
    <property type="match status" value="1"/>
</dbReference>
<dbReference type="Pfam" id="PF06965">
    <property type="entry name" value="Na_H_antiport_1"/>
    <property type="match status" value="1"/>
</dbReference>
<dbReference type="Pfam" id="PF13462">
    <property type="entry name" value="Thioredoxin_4"/>
    <property type="match status" value="1"/>
</dbReference>
<dbReference type="SUPFAM" id="SSF52833">
    <property type="entry name" value="Thioredoxin-like"/>
    <property type="match status" value="1"/>
</dbReference>
<dbReference type="PROSITE" id="PS51352">
    <property type="entry name" value="THIOREDOXIN_2"/>
    <property type="match status" value="1"/>
</dbReference>
<proteinExistence type="inferred from homology"/>
<evidence type="ECO:0000255" key="1">
    <source>
        <dbReference type="HAMAP-Rule" id="MF_01844"/>
    </source>
</evidence>
<evidence type="ECO:0000305" key="2"/>
<sequence>MPASSFGESSAHIRRRRVAHYLRTESGAAVLLVIVTVVALVWANSPLSNAYFELWHLDVGFNFGPLRLHMDLHHWVNDGLMVVFFFLIGLEVRQEFAHGSLRDRSRARLALIAGVTGVVLPALVYVLIVKLAGSEGLHGWGAVVGTDTAFMLGTLAIVGPRLSGQLRVFLLTLTVVDDFLAVSIIGIVYSEEIRIVPLLIALASLVGLWLLGRTRQWRATPYVLIVIVLWFATVYSGIHASLAGMAAGLLIPAYATQRHGVVAARQLFRDFWQSPSAASARAVDCGLSRGISVNERLHEFLRLPTALLIVPIFALANAGVDVRGGLLAEAFGSPVTWGVIAGLVLGKLLGIGLTTLVAVRLGLGRLPEGVGVGSVFGGAALSGIGFTVSLLIIGLAFGTTSDLGRQATVGVLVSMVFATLLGWLIFKVAAQRWGEKTADLPMVLEPPVDPEIDHIRGPEDAQLTLVEYVDFECAYCAHATGSWDDLRAHFGDDLRYVVRHLPHHPHGPIAARASEAAANQGMFWPWLDFVFTRQHALEREHLIGYAAELGLDVERFIADLDSPAVIERVERDLASAVASGAHATPTFFVEGRRLRGSYDARTVTAVLEASRRGTRTQEVPS</sequence>
<accession>A4G6P0</accession>
<keyword id="KW-0050">Antiport</keyword>
<keyword id="KW-0997">Cell inner membrane</keyword>
<keyword id="KW-1003">Cell membrane</keyword>
<keyword id="KW-0406">Ion transport</keyword>
<keyword id="KW-0472">Membrane</keyword>
<keyword id="KW-1185">Reference proteome</keyword>
<keyword id="KW-0915">Sodium</keyword>
<keyword id="KW-0739">Sodium transport</keyword>
<keyword id="KW-0812">Transmembrane</keyword>
<keyword id="KW-1133">Transmembrane helix</keyword>
<keyword id="KW-0813">Transport</keyword>
<protein>
    <recommendedName>
        <fullName evidence="1">Na(+)/H(+) antiporter NhaA</fullName>
    </recommendedName>
    <alternativeName>
        <fullName evidence="1">Sodium/proton antiporter NhaA</fullName>
    </alternativeName>
</protein>
<feature type="chain" id="PRO_0000334477" description="Na(+)/H(+) antiporter NhaA">
    <location>
        <begin position="1"/>
        <end position="621"/>
    </location>
</feature>
<feature type="transmembrane region" description="Helical" evidence="1">
    <location>
        <begin position="27"/>
        <end position="47"/>
    </location>
</feature>
<feature type="transmembrane region" description="Helical" evidence="1">
    <location>
        <begin position="72"/>
        <end position="92"/>
    </location>
</feature>
<feature type="transmembrane region" description="Helical" evidence="1">
    <location>
        <begin position="109"/>
        <end position="129"/>
    </location>
</feature>
<feature type="transmembrane region" description="Helical" evidence="1">
    <location>
        <begin position="139"/>
        <end position="159"/>
    </location>
</feature>
<feature type="transmembrane region" description="Helical" evidence="1">
    <location>
        <begin position="168"/>
        <end position="188"/>
    </location>
</feature>
<feature type="transmembrane region" description="Helical" evidence="1">
    <location>
        <begin position="192"/>
        <end position="212"/>
    </location>
</feature>
<feature type="transmembrane region" description="Helical" evidence="1">
    <location>
        <begin position="223"/>
        <end position="243"/>
    </location>
</feature>
<feature type="transmembrane region" description="Helical" evidence="1">
    <location>
        <begin position="300"/>
        <end position="320"/>
    </location>
</feature>
<feature type="transmembrane region" description="Helical" evidence="1">
    <location>
        <begin position="339"/>
        <end position="359"/>
    </location>
</feature>
<feature type="transmembrane region" description="Helical" evidence="1">
    <location>
        <begin position="375"/>
        <end position="395"/>
    </location>
</feature>
<feature type="transmembrane region" description="Helical" evidence="1">
    <location>
        <begin position="409"/>
        <end position="429"/>
    </location>
</feature>
<feature type="domain" description="Thioredoxin">
    <location>
        <begin position="431"/>
        <end position="578"/>
    </location>
</feature>
<feature type="region of interest" description="Na(+)/H(+) antiporter NhaA">
    <location>
        <begin position="1"/>
        <end position="430"/>
    </location>
</feature>
<reference key="1">
    <citation type="journal article" date="2007" name="PLoS Genet.">
        <title>A tale of two oxidation states: bacterial colonization of arsenic-rich environments.</title>
        <authorList>
            <person name="Muller D."/>
            <person name="Medigue C."/>
            <person name="Koechler S."/>
            <person name="Barbe V."/>
            <person name="Barakat M."/>
            <person name="Talla E."/>
            <person name="Bonnefoy V."/>
            <person name="Krin E."/>
            <person name="Arsene-Ploetze F."/>
            <person name="Carapito C."/>
            <person name="Chandler M."/>
            <person name="Cournoyer B."/>
            <person name="Cruveiller S."/>
            <person name="Dossat C."/>
            <person name="Duval S."/>
            <person name="Heymann M."/>
            <person name="Leize E."/>
            <person name="Lieutaud A."/>
            <person name="Lievremont D."/>
            <person name="Makita Y."/>
            <person name="Mangenot S."/>
            <person name="Nitschke W."/>
            <person name="Ortet P."/>
            <person name="Perdrial N."/>
            <person name="Schoepp B."/>
            <person name="Siguier P."/>
            <person name="Simeonova D.D."/>
            <person name="Rouy Z."/>
            <person name="Segurens B."/>
            <person name="Turlin E."/>
            <person name="Vallenet D."/>
            <person name="van Dorsselaer A."/>
            <person name="Weiss S."/>
            <person name="Weissenbach J."/>
            <person name="Lett M.-C."/>
            <person name="Danchin A."/>
            <person name="Bertin P.N."/>
        </authorList>
    </citation>
    <scope>NUCLEOTIDE SEQUENCE [LARGE SCALE GENOMIC DNA]</scope>
    <source>
        <strain>ULPAs1</strain>
    </source>
</reference>
<organism>
    <name type="scientific">Herminiimonas arsenicoxydans</name>
    <dbReference type="NCBI Taxonomy" id="204773"/>
    <lineage>
        <taxon>Bacteria</taxon>
        <taxon>Pseudomonadati</taxon>
        <taxon>Pseudomonadota</taxon>
        <taxon>Betaproteobacteria</taxon>
        <taxon>Burkholderiales</taxon>
        <taxon>Oxalobacteraceae</taxon>
        <taxon>Herminiimonas</taxon>
    </lineage>
</organism>
<name>NHAA_HERAR</name>
<comment type="function">
    <text evidence="1">Na(+)/H(+) antiporter that extrudes sodium in exchange for external protons.</text>
</comment>
<comment type="catalytic activity">
    <reaction evidence="1">
        <text>Na(+)(in) + 2 H(+)(out) = Na(+)(out) + 2 H(+)(in)</text>
        <dbReference type="Rhea" id="RHEA:29251"/>
        <dbReference type="ChEBI" id="CHEBI:15378"/>
        <dbReference type="ChEBI" id="CHEBI:29101"/>
    </reaction>
    <physiologicalReaction direction="left-to-right" evidence="1">
        <dbReference type="Rhea" id="RHEA:29252"/>
    </physiologicalReaction>
</comment>
<comment type="subcellular location">
    <subcellularLocation>
        <location evidence="1">Cell inner membrane</location>
        <topology evidence="1">Multi-pass membrane protein</topology>
    </subcellularLocation>
</comment>
<comment type="similarity">
    <text evidence="2">In the N-terminal section; belongs to the NhaA Na(+)/H(+) (TC 2.A.33) antiporter family.</text>
</comment>